<name>COAX_LEGPC</name>
<organism>
    <name type="scientific">Legionella pneumophila (strain Corby)</name>
    <dbReference type="NCBI Taxonomy" id="400673"/>
    <lineage>
        <taxon>Bacteria</taxon>
        <taxon>Pseudomonadati</taxon>
        <taxon>Pseudomonadota</taxon>
        <taxon>Gammaproteobacteria</taxon>
        <taxon>Legionellales</taxon>
        <taxon>Legionellaceae</taxon>
        <taxon>Legionella</taxon>
    </lineage>
</organism>
<feature type="chain" id="PRO_1000054382" description="Type III pantothenate kinase">
    <location>
        <begin position="1"/>
        <end position="256"/>
    </location>
</feature>
<feature type="active site" description="Proton acceptor" evidence="1">
    <location>
        <position position="108"/>
    </location>
</feature>
<feature type="binding site" evidence="1">
    <location>
        <begin position="6"/>
        <end position="13"/>
    </location>
    <ligand>
        <name>ATP</name>
        <dbReference type="ChEBI" id="CHEBI:30616"/>
    </ligand>
</feature>
<feature type="binding site" evidence="1">
    <location>
        <position position="99"/>
    </location>
    <ligand>
        <name>substrate</name>
    </ligand>
</feature>
<feature type="binding site" evidence="1">
    <location>
        <begin position="106"/>
        <end position="109"/>
    </location>
    <ligand>
        <name>substrate</name>
    </ligand>
</feature>
<feature type="binding site" evidence="1">
    <location>
        <position position="129"/>
    </location>
    <ligand>
        <name>K(+)</name>
        <dbReference type="ChEBI" id="CHEBI:29103"/>
    </ligand>
</feature>
<feature type="binding site" evidence="1">
    <location>
        <position position="132"/>
    </location>
    <ligand>
        <name>ATP</name>
        <dbReference type="ChEBI" id="CHEBI:30616"/>
    </ligand>
</feature>
<feature type="binding site" evidence="1">
    <location>
        <position position="184"/>
    </location>
    <ligand>
        <name>substrate</name>
    </ligand>
</feature>
<reference key="1">
    <citation type="submission" date="2006-11" db="EMBL/GenBank/DDBJ databases">
        <title>Identification and characterization of a new conjugation/ type IVA secretion system (trb/tra) of L. pneumophila Corby localized on a mobile genomic island.</title>
        <authorList>
            <person name="Gloeckner G."/>
            <person name="Albert-Weissenberger C."/>
            <person name="Weinmann E."/>
            <person name="Jacobi S."/>
            <person name="Schunder E."/>
            <person name="Steinert M."/>
            <person name="Buchrieser C."/>
            <person name="Hacker J."/>
            <person name="Heuner K."/>
        </authorList>
    </citation>
    <scope>NUCLEOTIDE SEQUENCE [LARGE SCALE GENOMIC DNA]</scope>
    <source>
        <strain>Corby</strain>
    </source>
</reference>
<comment type="function">
    <text evidence="1">Catalyzes the phosphorylation of pantothenate (Pan), the first step in CoA biosynthesis.</text>
</comment>
<comment type="catalytic activity">
    <reaction evidence="1">
        <text>(R)-pantothenate + ATP = (R)-4'-phosphopantothenate + ADP + H(+)</text>
        <dbReference type="Rhea" id="RHEA:16373"/>
        <dbReference type="ChEBI" id="CHEBI:10986"/>
        <dbReference type="ChEBI" id="CHEBI:15378"/>
        <dbReference type="ChEBI" id="CHEBI:29032"/>
        <dbReference type="ChEBI" id="CHEBI:30616"/>
        <dbReference type="ChEBI" id="CHEBI:456216"/>
        <dbReference type="EC" id="2.7.1.33"/>
    </reaction>
</comment>
<comment type="cofactor">
    <cofactor evidence="1">
        <name>NH4(+)</name>
        <dbReference type="ChEBI" id="CHEBI:28938"/>
    </cofactor>
    <cofactor evidence="1">
        <name>K(+)</name>
        <dbReference type="ChEBI" id="CHEBI:29103"/>
    </cofactor>
    <text evidence="1">A monovalent cation. Ammonium or potassium.</text>
</comment>
<comment type="pathway">
    <text evidence="1">Cofactor biosynthesis; coenzyme A biosynthesis; CoA from (R)-pantothenate: step 1/5.</text>
</comment>
<comment type="subunit">
    <text evidence="1">Homodimer.</text>
</comment>
<comment type="subcellular location">
    <subcellularLocation>
        <location evidence="1">Cytoplasm</location>
    </subcellularLocation>
</comment>
<comment type="similarity">
    <text evidence="1">Belongs to the type III pantothenate kinase family.</text>
</comment>
<accession>A5IG02</accession>
<keyword id="KW-0067">ATP-binding</keyword>
<keyword id="KW-0173">Coenzyme A biosynthesis</keyword>
<keyword id="KW-0963">Cytoplasm</keyword>
<keyword id="KW-0418">Kinase</keyword>
<keyword id="KW-0479">Metal-binding</keyword>
<keyword id="KW-0547">Nucleotide-binding</keyword>
<keyword id="KW-0630">Potassium</keyword>
<keyword id="KW-0808">Transferase</keyword>
<gene>
    <name evidence="1" type="primary">coaX</name>
    <name type="ordered locus">LPC_2380</name>
</gene>
<evidence type="ECO:0000255" key="1">
    <source>
        <dbReference type="HAMAP-Rule" id="MF_01274"/>
    </source>
</evidence>
<proteinExistence type="inferred from homology"/>
<protein>
    <recommendedName>
        <fullName evidence="1">Type III pantothenate kinase</fullName>
        <ecNumber evidence="1">2.7.1.33</ecNumber>
    </recommendedName>
    <alternativeName>
        <fullName evidence="1">PanK-III</fullName>
    </alternativeName>
    <alternativeName>
        <fullName evidence="1">Pantothenic acid kinase</fullName>
    </alternativeName>
</protein>
<sequence>MILCIDVGNSHIYGGVFDGDEIKLRFRHTSKVSTSDELGIFLKSVLRENNCSPETIRKIAICSVVPQVDYSLRSACVKYFSIDPFLLQAGVKTGLNIKYRNPVEVGADRIANAIAATHSFPNQNIIVIDFGTATTFCAISHKKAYLGGAILPGLRLSADALSKNTAKLPSVEIIKTESVVGRSTIESIQSGVYYGVLGACKELIQRIHHEAFNGDKILILATGGFASLFDKQGLYDHLVPDLVLQGIRLAAMMNTA</sequence>
<dbReference type="EC" id="2.7.1.33" evidence="1"/>
<dbReference type="EMBL" id="CP000675">
    <property type="protein sequence ID" value="ABQ56302.1"/>
    <property type="molecule type" value="Genomic_DNA"/>
</dbReference>
<dbReference type="RefSeq" id="WP_011215084.1">
    <property type="nucleotide sequence ID" value="NZ_JAPMSS010000002.1"/>
</dbReference>
<dbReference type="SMR" id="A5IG02"/>
<dbReference type="KEGG" id="lpc:LPC_2380"/>
<dbReference type="HOGENOM" id="CLU_066627_1_0_6"/>
<dbReference type="UniPathway" id="UPA00241">
    <property type="reaction ID" value="UER00352"/>
</dbReference>
<dbReference type="GO" id="GO:0005737">
    <property type="term" value="C:cytoplasm"/>
    <property type="evidence" value="ECO:0007669"/>
    <property type="project" value="UniProtKB-SubCell"/>
</dbReference>
<dbReference type="GO" id="GO:0005524">
    <property type="term" value="F:ATP binding"/>
    <property type="evidence" value="ECO:0007669"/>
    <property type="project" value="UniProtKB-UniRule"/>
</dbReference>
<dbReference type="GO" id="GO:0046872">
    <property type="term" value="F:metal ion binding"/>
    <property type="evidence" value="ECO:0007669"/>
    <property type="project" value="UniProtKB-KW"/>
</dbReference>
<dbReference type="GO" id="GO:0004594">
    <property type="term" value="F:pantothenate kinase activity"/>
    <property type="evidence" value="ECO:0007669"/>
    <property type="project" value="UniProtKB-UniRule"/>
</dbReference>
<dbReference type="GO" id="GO:0015937">
    <property type="term" value="P:coenzyme A biosynthetic process"/>
    <property type="evidence" value="ECO:0007669"/>
    <property type="project" value="UniProtKB-UniRule"/>
</dbReference>
<dbReference type="CDD" id="cd24015">
    <property type="entry name" value="ASKHA_NBD_PanK-III"/>
    <property type="match status" value="1"/>
</dbReference>
<dbReference type="Gene3D" id="3.30.420.40">
    <property type="match status" value="2"/>
</dbReference>
<dbReference type="HAMAP" id="MF_01274">
    <property type="entry name" value="Pantothen_kinase_3"/>
    <property type="match status" value="1"/>
</dbReference>
<dbReference type="InterPro" id="IPR043129">
    <property type="entry name" value="ATPase_NBD"/>
</dbReference>
<dbReference type="InterPro" id="IPR004619">
    <property type="entry name" value="Type_III_PanK"/>
</dbReference>
<dbReference type="NCBIfam" id="TIGR00671">
    <property type="entry name" value="baf"/>
    <property type="match status" value="1"/>
</dbReference>
<dbReference type="NCBIfam" id="NF009855">
    <property type="entry name" value="PRK13321.1"/>
    <property type="match status" value="1"/>
</dbReference>
<dbReference type="PANTHER" id="PTHR34265">
    <property type="entry name" value="TYPE III PANTOTHENATE KINASE"/>
    <property type="match status" value="1"/>
</dbReference>
<dbReference type="PANTHER" id="PTHR34265:SF1">
    <property type="entry name" value="TYPE III PANTOTHENATE KINASE"/>
    <property type="match status" value="1"/>
</dbReference>
<dbReference type="Pfam" id="PF03309">
    <property type="entry name" value="Pan_kinase"/>
    <property type="match status" value="1"/>
</dbReference>
<dbReference type="SUPFAM" id="SSF53067">
    <property type="entry name" value="Actin-like ATPase domain"/>
    <property type="match status" value="2"/>
</dbReference>